<organism>
    <name type="scientific">Saccharomyces cerevisiae (strain ATCC 204508 / S288c)</name>
    <name type="common">Baker's yeast</name>
    <dbReference type="NCBI Taxonomy" id="559292"/>
    <lineage>
        <taxon>Eukaryota</taxon>
        <taxon>Fungi</taxon>
        <taxon>Dikarya</taxon>
        <taxon>Ascomycota</taxon>
        <taxon>Saccharomycotina</taxon>
        <taxon>Saccharomycetes</taxon>
        <taxon>Saccharomycetales</taxon>
        <taxon>Saccharomycetaceae</taxon>
        <taxon>Saccharomyces</taxon>
    </lineage>
</organism>
<keyword id="KW-0002">3D-structure</keyword>
<keyword id="KW-0963">Cytoplasm</keyword>
<keyword id="KW-0597">Phosphoprotein</keyword>
<keyword id="KW-1185">Reference proteome</keyword>
<keyword id="KW-0687">Ribonucleoprotein</keyword>
<keyword id="KW-0689">Ribosomal protein</keyword>
<comment type="function">
    <text evidence="7">Component of the ribosome, a large ribonucleoprotein complex responsible for the synthesis of proteins in the cell. The small ribosomal subunit (SSU) binds messenger RNAs (mRNAs) and translates the encoded message by selecting cognate aminoacyl-transfer RNA (tRNA) molecules. The large subunit (LSU) contains the ribosomal catalytic site termed the peptidyl transferase center (PTC), which catalyzes the formation of peptide bonds, thereby polymerizing the amino acids delivered by tRNAs into a polypeptide chain. The nascent polypeptides leave the ribosome through a tunnel in the LSU and interact with protein factors that function in enzymatic processing, targeting, and the membrane insertion of nascent chains at the exit of the ribosomal tunnel.</text>
</comment>
<comment type="subunit">
    <text evidence="3 8">Component of the large ribosomal subunit (LSU). Mature yeast ribosomes consist of a small (40S) and a large (60S) subunit. The 40S small subunit contains 1 molecule of ribosomal RNA (18S rRNA) and 33 different proteins (encoded by 57 genes). The large 60S subunit contains 3 rRNA molecules (25S, 5.8S and 5S rRNA) and 46 different proteins (encoded by 81 genes). uL29 is associated with the polypeptide exit tunnel (PubMed:22096102, PubMed:9559554).</text>
</comment>
<comment type="subcellular location">
    <subcellularLocation>
        <location evidence="2 3">Cytoplasm</location>
    </subcellularLocation>
</comment>
<comment type="mass spectrometry">
    <text>Monoisotopic mass.</text>
</comment>
<comment type="miscellaneous">
    <text evidence="6">There are 2 genes for uL29 in yeast.</text>
</comment>
<comment type="similarity">
    <text evidence="6">Belongs to the universal ribosomal protein uL29 family.</text>
</comment>
<reference key="1">
    <citation type="journal article" date="1993" name="Cell">
        <title>The yeast SIS1 protein, a DnaJ homolog, is required for the initiation of translation.</title>
        <authorList>
            <person name="Zhong T."/>
            <person name="Arndt K.T."/>
        </authorList>
    </citation>
    <scope>NUCLEOTIDE SEQUENCE [GENOMIC DNA]</scope>
    <source>
        <strain>ATCC 204508 / S288c</strain>
    </source>
</reference>
<reference key="2">
    <citation type="journal article" date="1996" name="Yeast">
        <title>The sequence of 23 kb surrounding the SNF3 locus on the left arm of yeast chromosome IV reveals the location of five known genes and characterizes at least six new open reading frames including putative genes for ribosomal protein L35 and a sugar transport protein.</title>
        <authorList>
            <person name="Verhasselt P."/>
            <person name="Voet M."/>
            <person name="Mathys J."/>
            <person name="Volckaert G."/>
        </authorList>
    </citation>
    <scope>NUCLEOTIDE SEQUENCE [GENOMIC DNA]</scope>
    <source>
        <strain>ATCC 96604 / S288c / FY1679</strain>
    </source>
</reference>
<reference key="3">
    <citation type="journal article" date="1997" name="Nature">
        <title>The nucleotide sequence of Saccharomyces cerevisiae chromosome IV.</title>
        <authorList>
            <person name="Jacq C."/>
            <person name="Alt-Moerbe J."/>
            <person name="Andre B."/>
            <person name="Arnold W."/>
            <person name="Bahr A."/>
            <person name="Ballesta J.P.G."/>
            <person name="Bargues M."/>
            <person name="Baron L."/>
            <person name="Becker A."/>
            <person name="Biteau N."/>
            <person name="Bloecker H."/>
            <person name="Blugeon C."/>
            <person name="Boskovic J."/>
            <person name="Brandt P."/>
            <person name="Brueckner M."/>
            <person name="Buitrago M.J."/>
            <person name="Coster F."/>
            <person name="Delaveau T."/>
            <person name="del Rey F."/>
            <person name="Dujon B."/>
            <person name="Eide L.G."/>
            <person name="Garcia-Cantalejo J.M."/>
            <person name="Goffeau A."/>
            <person name="Gomez-Peris A."/>
            <person name="Granotier C."/>
            <person name="Hanemann V."/>
            <person name="Hankeln T."/>
            <person name="Hoheisel J.D."/>
            <person name="Jaeger W."/>
            <person name="Jimenez A."/>
            <person name="Jonniaux J.-L."/>
            <person name="Kraemer C."/>
            <person name="Kuester H."/>
            <person name="Laamanen P."/>
            <person name="Legros Y."/>
            <person name="Louis E.J."/>
            <person name="Moeller-Rieker S."/>
            <person name="Monnet A."/>
            <person name="Moro M."/>
            <person name="Mueller-Auer S."/>
            <person name="Nussbaumer B."/>
            <person name="Paricio N."/>
            <person name="Paulin L."/>
            <person name="Perea J."/>
            <person name="Perez-Alonso M."/>
            <person name="Perez-Ortin J.E."/>
            <person name="Pohl T.M."/>
            <person name="Prydz H."/>
            <person name="Purnelle B."/>
            <person name="Rasmussen S.W."/>
            <person name="Remacha M.A."/>
            <person name="Revuelta J.L."/>
            <person name="Rieger M."/>
            <person name="Salom D."/>
            <person name="Saluz H.P."/>
            <person name="Saiz J.E."/>
            <person name="Saren A.-M."/>
            <person name="Schaefer M."/>
            <person name="Scharfe M."/>
            <person name="Schmidt E.R."/>
            <person name="Schneider C."/>
            <person name="Scholler P."/>
            <person name="Schwarz S."/>
            <person name="Soler-Mira A."/>
            <person name="Urrestarazu L.A."/>
            <person name="Verhasselt P."/>
            <person name="Vissers S."/>
            <person name="Voet M."/>
            <person name="Volckaert G."/>
            <person name="Wagner G."/>
            <person name="Wambutt R."/>
            <person name="Wedler E."/>
            <person name="Wedler H."/>
            <person name="Woelfl S."/>
            <person name="Harris D.E."/>
            <person name="Bowman S."/>
            <person name="Brown D."/>
            <person name="Churcher C.M."/>
            <person name="Connor R."/>
            <person name="Dedman K."/>
            <person name="Gentles S."/>
            <person name="Hamlin N."/>
            <person name="Hunt S."/>
            <person name="Jones L."/>
            <person name="McDonald S."/>
            <person name="Murphy L.D."/>
            <person name="Niblett D."/>
            <person name="Odell C."/>
            <person name="Oliver K."/>
            <person name="Rajandream M.A."/>
            <person name="Richards C."/>
            <person name="Shore L."/>
            <person name="Walsh S.V."/>
            <person name="Barrell B.G."/>
            <person name="Dietrich F.S."/>
            <person name="Mulligan J.T."/>
            <person name="Allen E."/>
            <person name="Araujo R."/>
            <person name="Aviles E."/>
            <person name="Berno A."/>
            <person name="Carpenter J."/>
            <person name="Chen E."/>
            <person name="Cherry J.M."/>
            <person name="Chung E."/>
            <person name="Duncan M."/>
            <person name="Hunicke-Smith S."/>
            <person name="Hyman R.W."/>
            <person name="Komp C."/>
            <person name="Lashkari D."/>
            <person name="Lew H."/>
            <person name="Lin D."/>
            <person name="Mosedale D."/>
            <person name="Nakahara K."/>
            <person name="Namath A."/>
            <person name="Oefner P."/>
            <person name="Oh C."/>
            <person name="Petel F.X."/>
            <person name="Roberts D."/>
            <person name="Schramm S."/>
            <person name="Schroeder M."/>
            <person name="Shogren T."/>
            <person name="Shroff N."/>
            <person name="Winant A."/>
            <person name="Yelton M.A."/>
            <person name="Botstein D."/>
            <person name="Davis R.W."/>
            <person name="Johnston M."/>
            <person name="Andrews S."/>
            <person name="Brinkman R."/>
            <person name="Cooper J."/>
            <person name="Ding H."/>
            <person name="Du Z."/>
            <person name="Favello A."/>
            <person name="Fulton L."/>
            <person name="Gattung S."/>
            <person name="Greco T."/>
            <person name="Hallsworth K."/>
            <person name="Hawkins J."/>
            <person name="Hillier L.W."/>
            <person name="Jier M."/>
            <person name="Johnson D."/>
            <person name="Johnston L."/>
            <person name="Kirsten J."/>
            <person name="Kucaba T."/>
            <person name="Langston Y."/>
            <person name="Latreille P."/>
            <person name="Le T."/>
            <person name="Mardis E."/>
            <person name="Menezes S."/>
            <person name="Miller N."/>
            <person name="Nhan M."/>
            <person name="Pauley A."/>
            <person name="Peluso D."/>
            <person name="Rifkin L."/>
            <person name="Riles L."/>
            <person name="Taich A."/>
            <person name="Trevaskis E."/>
            <person name="Vignati D."/>
            <person name="Wilcox L."/>
            <person name="Wohldman P."/>
            <person name="Vaudin M."/>
            <person name="Wilson R."/>
            <person name="Waterston R."/>
            <person name="Albermann K."/>
            <person name="Hani J."/>
            <person name="Heumann K."/>
            <person name="Kleine K."/>
            <person name="Mewes H.-W."/>
            <person name="Zollner A."/>
            <person name="Zaccaria P."/>
        </authorList>
    </citation>
    <scope>NUCLEOTIDE SEQUENCE [LARGE SCALE GENOMIC DNA]</scope>
    <source>
        <strain>ATCC 204508 / S288c</strain>
    </source>
</reference>
<reference key="4">
    <citation type="journal article" date="2014" name="G3 (Bethesda)">
        <title>The reference genome sequence of Saccharomyces cerevisiae: Then and now.</title>
        <authorList>
            <person name="Engel S.R."/>
            <person name="Dietrich F.S."/>
            <person name="Fisk D.G."/>
            <person name="Binkley G."/>
            <person name="Balakrishnan R."/>
            <person name="Costanzo M.C."/>
            <person name="Dwight S.S."/>
            <person name="Hitz B.C."/>
            <person name="Karra K."/>
            <person name="Nash R.S."/>
            <person name="Weng S."/>
            <person name="Wong E.D."/>
            <person name="Lloyd P."/>
            <person name="Skrzypek M.S."/>
            <person name="Miyasato S.R."/>
            <person name="Simison M."/>
            <person name="Cherry J.M."/>
        </authorList>
    </citation>
    <scope>GENOME REANNOTATION</scope>
    <source>
        <strain>ATCC 204508 / S288c</strain>
    </source>
</reference>
<reference key="5">
    <citation type="journal article" date="1998" name="Yeast">
        <title>The list of cytoplasmic ribosomal proteins of Saccharomyces cerevisiae.</title>
        <authorList>
            <person name="Planta R.J."/>
            <person name="Mager W.H."/>
        </authorList>
    </citation>
    <scope>NOMENCLATURE</scope>
    <scope>SUBUNIT</scope>
</reference>
<reference key="6">
    <citation type="journal article" date="2002" name="Proc. Natl. Acad. Sci. U.S.A.">
        <title>Direct mass spectrometric analysis of intact proteins of the yeast large ribosomal subunit using capillary LC/FTICR.</title>
        <authorList>
            <person name="Lee S.-W."/>
            <person name="Berger S.J."/>
            <person name="Martinovic S."/>
            <person name="Pasa-Tolic L."/>
            <person name="Anderson G.A."/>
            <person name="Shen Y."/>
            <person name="Zhao R."/>
            <person name="Smith R.D."/>
        </authorList>
    </citation>
    <scope>MASS SPECTROMETRY</scope>
    <scope>CLEAVAGE OF INITIATOR METHIONINE</scope>
</reference>
<reference key="7">
    <citation type="journal article" date="2003" name="Nature">
        <title>Global analysis of protein localization in budding yeast.</title>
        <authorList>
            <person name="Huh W.-K."/>
            <person name="Falvo J.V."/>
            <person name="Gerke L.C."/>
            <person name="Carroll A.S."/>
            <person name="Howson R.W."/>
            <person name="Weissman J.S."/>
            <person name="O'Shea E.K."/>
        </authorList>
    </citation>
    <scope>SUBCELLULAR LOCATION [LARGE SCALE ANALYSIS]</scope>
</reference>
<reference key="8">
    <citation type="journal article" date="2009" name="Science">
        <title>Global analysis of Cdk1 substrate phosphorylation sites provides insights into evolution.</title>
        <authorList>
            <person name="Holt L.J."/>
            <person name="Tuch B.B."/>
            <person name="Villen J."/>
            <person name="Johnson A.D."/>
            <person name="Gygi S.P."/>
            <person name="Morgan D.O."/>
        </authorList>
    </citation>
    <scope>PHOSPHORYLATION [LARGE SCALE ANALYSIS] AT SER-13 AND SER-50</scope>
    <scope>IDENTIFICATION BY MASS SPECTROMETRY [LARGE SCALE ANALYSIS]</scope>
</reference>
<reference key="9">
    <citation type="journal article" date="2012" name="Proc. Natl. Acad. Sci. U.S.A.">
        <title>N-terminal acetylome analyses and functional insights of the N-terminal acetyltransferase NatB.</title>
        <authorList>
            <person name="Van Damme P."/>
            <person name="Lasa M."/>
            <person name="Polevoda B."/>
            <person name="Gazquez C."/>
            <person name="Elosegui-Artola A."/>
            <person name="Kim D.S."/>
            <person name="De Juan-Pardo E."/>
            <person name="Demeyer K."/>
            <person name="Hole K."/>
            <person name="Larrea E."/>
            <person name="Timmerman E."/>
            <person name="Prieto J."/>
            <person name="Arnesen T."/>
            <person name="Sherman F."/>
            <person name="Gevaert K."/>
            <person name="Aldabe R."/>
        </authorList>
    </citation>
    <scope>IDENTIFICATION BY MASS SPECTROMETRY [LARGE SCALE ANALYSIS]</scope>
</reference>
<reference key="10">
    <citation type="journal article" date="2014" name="Curr. Opin. Struct. Biol.">
        <title>A new system for naming ribosomal proteins.</title>
        <authorList>
            <person name="Ban N."/>
            <person name="Beckmann R."/>
            <person name="Cate J.H.D."/>
            <person name="Dinman J.D."/>
            <person name="Dragon F."/>
            <person name="Ellis S.R."/>
            <person name="Lafontaine D.L.J."/>
            <person name="Lindahl L."/>
            <person name="Liljas A."/>
            <person name="Lipton J.M."/>
            <person name="McAlear M.A."/>
            <person name="Moore P.B."/>
            <person name="Noller H.F."/>
            <person name="Ortega J."/>
            <person name="Panse V.G."/>
            <person name="Ramakrishnan V."/>
            <person name="Spahn C.M.T."/>
            <person name="Steitz T.A."/>
            <person name="Tchorzewski M."/>
            <person name="Tollervey D."/>
            <person name="Warren A.J."/>
            <person name="Williamson J.R."/>
            <person name="Wilson D."/>
            <person name="Yonath A."/>
            <person name="Yusupov M."/>
        </authorList>
    </citation>
    <scope>NOMENCLATURE</scope>
</reference>
<reference key="11">
    <citation type="journal article" date="2001" name="Cell">
        <title>Structure of the 80S ribosome from Saccharomyces cerevisiae -- tRNA-ribosome and subunit-subunit interactions.</title>
        <authorList>
            <person name="Spahn C.M.T."/>
            <person name="Beckmann R."/>
            <person name="Eswar N."/>
            <person name="Penczek P.A."/>
            <person name="Sali A."/>
            <person name="Blobel G."/>
            <person name="Frank J."/>
        </authorList>
    </citation>
    <scope>3D-STRUCTURE MODELING OF 2-60</scope>
    <scope>ELECTRON MICROSCOPY</scope>
</reference>
<reference key="12">
    <citation type="journal article" date="2004" name="EMBO J.">
        <title>Domain movements of elongation factor eEF2 and the eukaryotic 80S ribosome facilitate tRNA translocation.</title>
        <authorList>
            <person name="Spahn C.M.T."/>
            <person name="Gomez-Lorenzo M.G."/>
            <person name="Grassucci R.A."/>
            <person name="Joergensen R."/>
            <person name="Andersen G.R."/>
            <person name="Beckmann R."/>
            <person name="Penczek P.A."/>
            <person name="Ballesta J.P.G."/>
            <person name="Frank J."/>
        </authorList>
    </citation>
    <scope>3D-STRUCTURE MODELING</scope>
    <scope>ELECTRON MICROSCOPY</scope>
</reference>
<reference key="13">
    <citation type="journal article" date="2009" name="Science">
        <title>Structure of monomeric yeast and mammalian Sec61 complexes interacting with the translating ribosome.</title>
        <authorList>
            <person name="Becker T."/>
            <person name="Bhushan S."/>
            <person name="Jarasch A."/>
            <person name="Armache J.P."/>
            <person name="Funes S."/>
            <person name="Jossinet F."/>
            <person name="Gumbart J."/>
            <person name="Mielke T."/>
            <person name="Berninghausen O."/>
            <person name="Schulten K."/>
            <person name="Westhof E."/>
            <person name="Gilmore R."/>
            <person name="Mandon E.C."/>
            <person name="Beckmann R."/>
        </authorList>
    </citation>
    <scope>STRUCTURE BY ELECTRON MICROSCOPY (8.60 ANGSTROMS)</scope>
</reference>
<reference key="14">
    <citation type="journal article" date="2010" name="Proc. Natl. Acad. Sci. U.S.A.">
        <title>Cryo-EM structure and rRNA model of a translating eukaryotic 80S ribosome at 5.5-A resolution.</title>
        <authorList>
            <person name="Armache J.P."/>
            <person name="Jarasch A."/>
            <person name="Anger A.M."/>
            <person name="Villa E."/>
            <person name="Becker T."/>
            <person name="Bhushan S."/>
            <person name="Jossinet F."/>
            <person name="Habeck M."/>
            <person name="Dindar G."/>
            <person name="Franckenberg S."/>
            <person name="Marquez V."/>
            <person name="Mielke T."/>
            <person name="Thomm M."/>
            <person name="Berninghausen O."/>
            <person name="Beatrix B."/>
            <person name="Soding J."/>
            <person name="Westhof E."/>
            <person name="Wilson D.N."/>
            <person name="Beckmann R."/>
        </authorList>
    </citation>
    <scope>STRUCTURE BY ELECTRON MICROSCOPY (8.80 ANGSTROMS)</scope>
</reference>
<reference key="15">
    <citation type="journal article" date="2010" name="Science">
        <title>Crystal structure of the eukaryotic ribosome.</title>
        <authorList>
            <person name="Ben-Shem A."/>
            <person name="Jenner L."/>
            <person name="Yusupova G."/>
            <person name="Yusupov M."/>
        </authorList>
    </citation>
    <scope>X-RAY CRYSTALLOGRAPHY (4.00 ANGSTROMS)</scope>
</reference>
<reference key="16">
    <citation type="journal article" date="2011" name="Science">
        <title>The structure of the eukaryotic ribosome at 3.0 A resolution.</title>
        <authorList>
            <person name="Ben-Shem A."/>
            <person name="Garreau de Loubresse N."/>
            <person name="Melnikov S."/>
            <person name="Jenner L."/>
            <person name="Yusupova G."/>
            <person name="Yusupov M."/>
        </authorList>
    </citation>
    <scope>X-RAY CRYSTALLOGRAPHY (3.00 ANGSTROMS)</scope>
    <scope>SUBUNIT</scope>
    <scope>SUBCELLULAR LOCATION</scope>
</reference>
<reference key="17">
    <citation type="journal article" date="2012" name="Nat. Struct. Mol. Biol.">
        <title>Cryo-EM structures of Arx1 and maturation factors Rei1 and Jjj1 bound to the 60S ribosomal subunit.</title>
        <authorList>
            <person name="Greber B.J."/>
            <person name="Boehringer D."/>
            <person name="Montellese C."/>
            <person name="Ban N."/>
        </authorList>
    </citation>
    <scope>STRUCTURE BY ELECTRON MICROSCOPY (8.10 ANGSTROMS)</scope>
</reference>
<name>RL35A_YEAST</name>
<feature type="initiator methionine" description="Removed" evidence="1">
    <location>
        <position position="1"/>
    </location>
</feature>
<feature type="chain" id="PRO_0000130552" description="Large ribosomal subunit protein uL29A">
    <location>
        <begin position="2"/>
        <end position="120"/>
    </location>
</feature>
<feature type="modified residue" description="Phosphoserine" evidence="9">
    <location>
        <position position="13"/>
    </location>
</feature>
<feature type="modified residue" description="Phosphoserine" evidence="9">
    <location>
        <position position="50"/>
    </location>
</feature>
<feature type="helix" evidence="10">
    <location>
        <begin position="6"/>
        <end position="10"/>
    </location>
</feature>
<feature type="helix" evidence="10">
    <location>
        <begin position="14"/>
        <end position="33"/>
    </location>
</feature>
<feature type="turn" evidence="10">
    <location>
        <begin position="34"/>
        <end position="37"/>
    </location>
</feature>
<feature type="helix" evidence="10">
    <location>
        <begin position="43"/>
        <end position="69"/>
    </location>
</feature>
<feature type="turn" evidence="10">
    <location>
        <begin position="70"/>
        <end position="72"/>
    </location>
</feature>
<feature type="turn" evidence="10">
    <location>
        <begin position="78"/>
        <end position="80"/>
    </location>
</feature>
<feature type="turn" evidence="10">
    <location>
        <begin position="87"/>
        <end position="89"/>
    </location>
</feature>
<feature type="helix" evidence="10">
    <location>
        <begin position="94"/>
        <end position="98"/>
    </location>
</feature>
<feature type="helix" evidence="11">
    <location>
        <begin position="102"/>
        <end position="109"/>
    </location>
</feature>
<feature type="strand" evidence="10">
    <location>
        <begin position="116"/>
        <end position="118"/>
    </location>
</feature>
<accession>P0CX84</accession>
<accession>D6VRG2</accession>
<accession>P39741</accession>
<accession>P39930</accession>
<protein>
    <recommendedName>
        <fullName evidence="4">Large ribosomal subunit protein uL29A</fullName>
    </recommendedName>
    <alternativeName>
        <fullName evidence="5">60S ribosomal protein L35-A</fullName>
    </alternativeName>
</protein>
<sequence>MAGVKAYELRTKSKEQLASQLVDLKKELAELKVQKLSRPSLPKIKTVRKSIACVLTVINEQQREAVRQLYKGKKYQPKDLRAKKTRALRRALTKFEASQVTEKQRKKQIAFPQRKYAIKA</sequence>
<evidence type="ECO:0000269" key="1">
    <source>
    </source>
</evidence>
<evidence type="ECO:0000269" key="2">
    <source>
    </source>
</evidence>
<evidence type="ECO:0000269" key="3">
    <source>
    </source>
</evidence>
<evidence type="ECO:0000303" key="4">
    <source>
    </source>
</evidence>
<evidence type="ECO:0000303" key="5">
    <source>
    </source>
</evidence>
<evidence type="ECO:0000305" key="6"/>
<evidence type="ECO:0000305" key="7">
    <source>
    </source>
</evidence>
<evidence type="ECO:0000305" key="8">
    <source>
    </source>
</evidence>
<evidence type="ECO:0007744" key="9">
    <source>
    </source>
</evidence>
<evidence type="ECO:0007829" key="10">
    <source>
        <dbReference type="PDB" id="6EM3"/>
    </source>
</evidence>
<evidence type="ECO:0007829" key="11">
    <source>
        <dbReference type="PDB" id="7R6Q"/>
    </source>
</evidence>
<gene>
    <name evidence="5" type="primary">RPL35A</name>
    <name type="synonym">SOS1</name>
    <name type="ordered locus">YDL191W</name>
    <name type="ORF">D1249</name>
</gene>
<proteinExistence type="evidence at protein level"/>
<dbReference type="EMBL" id="M82913">
    <property type="protein sequence ID" value="AAA34492.1"/>
    <property type="molecule type" value="Genomic_DNA"/>
</dbReference>
<dbReference type="EMBL" id="X83276">
    <property type="protein sequence ID" value="CAA58256.1"/>
    <property type="molecule type" value="Genomic_DNA"/>
</dbReference>
<dbReference type="EMBL" id="Z74239">
    <property type="protein sequence ID" value="CAA98768.1"/>
    <property type="molecule type" value="Genomic_DNA"/>
</dbReference>
<dbReference type="EMBL" id="BK006938">
    <property type="protein sequence ID" value="DAA11722.1"/>
    <property type="molecule type" value="Genomic_DNA"/>
</dbReference>
<dbReference type="PIR" id="S30770">
    <property type="entry name" value="S30770"/>
</dbReference>
<dbReference type="RefSeq" id="NP_010145.1">
    <property type="nucleotide sequence ID" value="NM_001180196.2"/>
</dbReference>
<dbReference type="PDB" id="2WW9">
    <property type="method" value="EM"/>
    <property type="resolution" value="8.60 A"/>
    <property type="chains" value="N=1-120"/>
</dbReference>
<dbReference type="PDB" id="2WWA">
    <property type="method" value="EM"/>
    <property type="resolution" value="8.90 A"/>
    <property type="chains" value="N=1-120"/>
</dbReference>
<dbReference type="PDB" id="2WWB">
    <property type="method" value="EM"/>
    <property type="resolution" value="6.48 A"/>
    <property type="chains" value="N=1-120"/>
</dbReference>
<dbReference type="PDB" id="3J6X">
    <property type="method" value="EM"/>
    <property type="resolution" value="6.10 A"/>
    <property type="chains" value="75=1-120"/>
</dbReference>
<dbReference type="PDB" id="3J6Y">
    <property type="method" value="EM"/>
    <property type="resolution" value="6.10 A"/>
    <property type="chains" value="75=1-120"/>
</dbReference>
<dbReference type="PDB" id="3J77">
    <property type="method" value="EM"/>
    <property type="resolution" value="6.20 A"/>
    <property type="chains" value="85=1-120"/>
</dbReference>
<dbReference type="PDB" id="3J78">
    <property type="method" value="EM"/>
    <property type="resolution" value="6.30 A"/>
    <property type="chains" value="85=1-120"/>
</dbReference>
<dbReference type="PDB" id="3JCT">
    <property type="method" value="EM"/>
    <property type="resolution" value="3.08 A"/>
    <property type="chains" value="h=1-120"/>
</dbReference>
<dbReference type="PDB" id="4U3M">
    <property type="method" value="X-ray"/>
    <property type="resolution" value="3.00 A"/>
    <property type="chains" value="O5/o5=2-120"/>
</dbReference>
<dbReference type="PDB" id="4U3N">
    <property type="method" value="X-ray"/>
    <property type="resolution" value="3.20 A"/>
    <property type="chains" value="O5/o5=2-120"/>
</dbReference>
<dbReference type="PDB" id="4U3U">
    <property type="method" value="X-ray"/>
    <property type="resolution" value="2.90 A"/>
    <property type="chains" value="O5/o5=2-120"/>
</dbReference>
<dbReference type="PDB" id="4U4N">
    <property type="method" value="X-ray"/>
    <property type="resolution" value="3.10 A"/>
    <property type="chains" value="O5/o5=2-120"/>
</dbReference>
<dbReference type="PDB" id="4U4O">
    <property type="method" value="X-ray"/>
    <property type="resolution" value="3.60 A"/>
    <property type="chains" value="O5/o5=2-120"/>
</dbReference>
<dbReference type="PDB" id="4U4Q">
    <property type="method" value="X-ray"/>
    <property type="resolution" value="3.00 A"/>
    <property type="chains" value="O5/o5=2-120"/>
</dbReference>
<dbReference type="PDB" id="4U4R">
    <property type="method" value="X-ray"/>
    <property type="resolution" value="2.80 A"/>
    <property type="chains" value="O5/o5=2-120"/>
</dbReference>
<dbReference type="PDB" id="4U4U">
    <property type="method" value="X-ray"/>
    <property type="resolution" value="3.00 A"/>
    <property type="chains" value="O5/o5=2-120"/>
</dbReference>
<dbReference type="PDB" id="4U4Y">
    <property type="method" value="X-ray"/>
    <property type="resolution" value="3.20 A"/>
    <property type="chains" value="O5/o5=2-120"/>
</dbReference>
<dbReference type="PDB" id="4U4Z">
    <property type="method" value="X-ray"/>
    <property type="resolution" value="3.10 A"/>
    <property type="chains" value="O5/o5=2-120"/>
</dbReference>
<dbReference type="PDB" id="4U50">
    <property type="method" value="X-ray"/>
    <property type="resolution" value="3.20 A"/>
    <property type="chains" value="O5/o5=2-120"/>
</dbReference>
<dbReference type="PDB" id="4U51">
    <property type="method" value="X-ray"/>
    <property type="resolution" value="3.20 A"/>
    <property type="chains" value="O5/o5=2-120"/>
</dbReference>
<dbReference type="PDB" id="4U52">
    <property type="method" value="X-ray"/>
    <property type="resolution" value="3.00 A"/>
    <property type="chains" value="O5/o5=2-120"/>
</dbReference>
<dbReference type="PDB" id="4U53">
    <property type="method" value="X-ray"/>
    <property type="resolution" value="3.30 A"/>
    <property type="chains" value="O5/o5=2-120"/>
</dbReference>
<dbReference type="PDB" id="4U55">
    <property type="method" value="X-ray"/>
    <property type="resolution" value="3.20 A"/>
    <property type="chains" value="O5/o5=2-120"/>
</dbReference>
<dbReference type="PDB" id="4U56">
    <property type="method" value="X-ray"/>
    <property type="resolution" value="3.45 A"/>
    <property type="chains" value="O5/o5=2-120"/>
</dbReference>
<dbReference type="PDB" id="4U6F">
    <property type="method" value="X-ray"/>
    <property type="resolution" value="3.10 A"/>
    <property type="chains" value="O5/o5=2-120"/>
</dbReference>
<dbReference type="PDB" id="4V4B">
    <property type="method" value="EM"/>
    <property type="resolution" value="11.70 A"/>
    <property type="chains" value="BX=1-120"/>
</dbReference>
<dbReference type="PDB" id="4V6I">
    <property type="method" value="EM"/>
    <property type="resolution" value="8.80 A"/>
    <property type="chains" value="Bc=1-120"/>
</dbReference>
<dbReference type="PDB" id="4V7F">
    <property type="method" value="EM"/>
    <property type="resolution" value="8.70 A"/>
    <property type="chains" value="Z=1-120"/>
</dbReference>
<dbReference type="PDB" id="4V7R">
    <property type="method" value="X-ray"/>
    <property type="resolution" value="4.00 A"/>
    <property type="chains" value="Bc/Dc=1-120"/>
</dbReference>
<dbReference type="PDB" id="4V88">
    <property type="method" value="X-ray"/>
    <property type="resolution" value="3.00 A"/>
    <property type="chains" value="Bh/Dh=1-120"/>
</dbReference>
<dbReference type="PDB" id="4V8T">
    <property type="method" value="EM"/>
    <property type="resolution" value="8.10 A"/>
    <property type="chains" value="h=1-120"/>
</dbReference>
<dbReference type="PDB" id="4V91">
    <property type="method" value="EM"/>
    <property type="resolution" value="3.70 A"/>
    <property type="chains" value="h=1-120"/>
</dbReference>
<dbReference type="PDB" id="5APN">
    <property type="method" value="EM"/>
    <property type="resolution" value="3.91 A"/>
    <property type="chains" value="h=1-120"/>
</dbReference>
<dbReference type="PDB" id="5APO">
    <property type="method" value="EM"/>
    <property type="resolution" value="3.41 A"/>
    <property type="chains" value="h=1-120"/>
</dbReference>
<dbReference type="PDB" id="5DAT">
    <property type="method" value="X-ray"/>
    <property type="resolution" value="3.15 A"/>
    <property type="chains" value="O5/o5=2-120"/>
</dbReference>
<dbReference type="PDB" id="5DC3">
    <property type="method" value="X-ray"/>
    <property type="resolution" value="3.25 A"/>
    <property type="chains" value="O5/o5=2-120"/>
</dbReference>
<dbReference type="PDB" id="5DGE">
    <property type="method" value="X-ray"/>
    <property type="resolution" value="3.45 A"/>
    <property type="chains" value="O5/o5=2-120"/>
</dbReference>
<dbReference type="PDB" id="5DGF">
    <property type="method" value="X-ray"/>
    <property type="resolution" value="3.30 A"/>
    <property type="chains" value="O5/o5=2-120"/>
</dbReference>
<dbReference type="PDB" id="5DGV">
    <property type="method" value="X-ray"/>
    <property type="resolution" value="3.10 A"/>
    <property type="chains" value="O5/o5=2-120"/>
</dbReference>
<dbReference type="PDB" id="5FCI">
    <property type="method" value="X-ray"/>
    <property type="resolution" value="3.40 A"/>
    <property type="chains" value="O5/o5=2-120"/>
</dbReference>
<dbReference type="PDB" id="5FCJ">
    <property type="method" value="X-ray"/>
    <property type="resolution" value="3.10 A"/>
    <property type="chains" value="O5/o5=2-120"/>
</dbReference>
<dbReference type="PDB" id="5GAK">
    <property type="method" value="EM"/>
    <property type="resolution" value="3.88 A"/>
    <property type="chains" value="j=1-120"/>
</dbReference>
<dbReference type="PDB" id="5H4P">
    <property type="method" value="EM"/>
    <property type="resolution" value="3.07 A"/>
    <property type="chains" value="h=1-120"/>
</dbReference>
<dbReference type="PDB" id="5I4L">
    <property type="method" value="X-ray"/>
    <property type="resolution" value="3.10 A"/>
    <property type="chains" value="O5/o5=2-120"/>
</dbReference>
<dbReference type="PDB" id="5JCS">
    <property type="method" value="EM"/>
    <property type="resolution" value="9.50 A"/>
    <property type="chains" value="h=1-120"/>
</dbReference>
<dbReference type="PDB" id="5JUO">
    <property type="method" value="EM"/>
    <property type="resolution" value="4.00 A"/>
    <property type="chains" value="MA=1-120"/>
</dbReference>
<dbReference type="PDB" id="5JUP">
    <property type="method" value="EM"/>
    <property type="resolution" value="3.50 A"/>
    <property type="chains" value="MA=1-120"/>
</dbReference>
<dbReference type="PDB" id="5JUS">
    <property type="method" value="EM"/>
    <property type="resolution" value="4.20 A"/>
    <property type="chains" value="MA=1-120"/>
</dbReference>
<dbReference type="PDB" id="5JUT">
    <property type="method" value="EM"/>
    <property type="resolution" value="4.00 A"/>
    <property type="chains" value="MA=1-120"/>
</dbReference>
<dbReference type="PDB" id="5JUU">
    <property type="method" value="EM"/>
    <property type="resolution" value="4.00 A"/>
    <property type="chains" value="MA=1-120"/>
</dbReference>
<dbReference type="PDB" id="5LYB">
    <property type="method" value="X-ray"/>
    <property type="resolution" value="3.25 A"/>
    <property type="chains" value="O5/o5=2-120"/>
</dbReference>
<dbReference type="PDB" id="5M1J">
    <property type="method" value="EM"/>
    <property type="resolution" value="3.30 A"/>
    <property type="chains" value="h5=2-120"/>
</dbReference>
<dbReference type="PDB" id="5MC6">
    <property type="method" value="EM"/>
    <property type="resolution" value="3.80 A"/>
    <property type="chains" value="BP=1-120"/>
</dbReference>
<dbReference type="PDB" id="5MEI">
    <property type="method" value="X-ray"/>
    <property type="resolution" value="3.50 A"/>
    <property type="chains" value="AI/DJ=2-120"/>
</dbReference>
<dbReference type="PDB" id="5NDG">
    <property type="method" value="X-ray"/>
    <property type="resolution" value="3.70 A"/>
    <property type="chains" value="O5/o5=2-120"/>
</dbReference>
<dbReference type="PDB" id="5NDV">
    <property type="method" value="X-ray"/>
    <property type="resolution" value="3.30 A"/>
    <property type="chains" value="O5/o5=2-120"/>
</dbReference>
<dbReference type="PDB" id="5NDW">
    <property type="method" value="X-ray"/>
    <property type="resolution" value="3.70 A"/>
    <property type="chains" value="O5/o5=2-120"/>
</dbReference>
<dbReference type="PDB" id="5OBM">
    <property type="method" value="X-ray"/>
    <property type="resolution" value="3.40 A"/>
    <property type="chains" value="O5/o5=2-120"/>
</dbReference>
<dbReference type="PDB" id="5ON6">
    <property type="method" value="X-ray"/>
    <property type="resolution" value="3.10 A"/>
    <property type="chains" value="AI/DJ=2-120"/>
</dbReference>
<dbReference type="PDB" id="5T62">
    <property type="method" value="EM"/>
    <property type="resolution" value="3.30 A"/>
    <property type="chains" value="u=1-120"/>
</dbReference>
<dbReference type="PDB" id="5T6R">
    <property type="method" value="EM"/>
    <property type="resolution" value="4.50 A"/>
    <property type="chains" value="u=1-120"/>
</dbReference>
<dbReference type="PDB" id="5TBW">
    <property type="method" value="X-ray"/>
    <property type="resolution" value="3.00 A"/>
    <property type="chains" value="AI/DJ=2-120"/>
</dbReference>
<dbReference type="PDB" id="5TGA">
    <property type="method" value="X-ray"/>
    <property type="resolution" value="3.30 A"/>
    <property type="chains" value="O5/o5=2-120"/>
</dbReference>
<dbReference type="PDB" id="5TGM">
    <property type="method" value="X-ray"/>
    <property type="resolution" value="3.50 A"/>
    <property type="chains" value="O5/o5=2-120"/>
</dbReference>
<dbReference type="PDB" id="5Z3G">
    <property type="method" value="EM"/>
    <property type="resolution" value="3.65 A"/>
    <property type="chains" value="l=1-120"/>
</dbReference>
<dbReference type="PDB" id="6C0F">
    <property type="method" value="EM"/>
    <property type="resolution" value="3.70 A"/>
    <property type="chains" value="h=1-120"/>
</dbReference>
<dbReference type="PDB" id="6CB1">
    <property type="method" value="EM"/>
    <property type="resolution" value="4.60 A"/>
    <property type="chains" value="h=1-120"/>
</dbReference>
<dbReference type="PDB" id="6ELZ">
    <property type="method" value="EM"/>
    <property type="resolution" value="3.30 A"/>
    <property type="chains" value="h=1-120"/>
</dbReference>
<dbReference type="PDB" id="6EM1">
    <property type="method" value="EM"/>
    <property type="resolution" value="3.60 A"/>
    <property type="chains" value="h=1-120"/>
</dbReference>
<dbReference type="PDB" id="6EM3">
    <property type="method" value="EM"/>
    <property type="resolution" value="3.20 A"/>
    <property type="chains" value="h=1-120"/>
</dbReference>
<dbReference type="PDB" id="6EM4">
    <property type="method" value="EM"/>
    <property type="resolution" value="4.10 A"/>
    <property type="chains" value="h=1-120"/>
</dbReference>
<dbReference type="PDB" id="6EM5">
    <property type="method" value="EM"/>
    <property type="resolution" value="4.30 A"/>
    <property type="chains" value="h=1-120"/>
</dbReference>
<dbReference type="PDB" id="6FT6">
    <property type="method" value="EM"/>
    <property type="resolution" value="3.90 A"/>
    <property type="chains" value="h=1-120"/>
</dbReference>
<dbReference type="PDB" id="6GQ1">
    <property type="method" value="EM"/>
    <property type="resolution" value="4.40 A"/>
    <property type="chains" value="h=2-120"/>
</dbReference>
<dbReference type="PDB" id="6GQB">
    <property type="method" value="EM"/>
    <property type="resolution" value="3.90 A"/>
    <property type="chains" value="h=2-120"/>
</dbReference>
<dbReference type="PDB" id="6GQV">
    <property type="method" value="EM"/>
    <property type="resolution" value="4.00 A"/>
    <property type="chains" value="h=2-120"/>
</dbReference>
<dbReference type="PDB" id="6HD7">
    <property type="method" value="EM"/>
    <property type="resolution" value="3.40 A"/>
    <property type="chains" value="j=1-120"/>
</dbReference>
<dbReference type="PDB" id="6HHQ">
    <property type="method" value="X-ray"/>
    <property type="resolution" value="3.10 A"/>
    <property type="chains" value="AI/DJ=1-120"/>
</dbReference>
<dbReference type="PDB" id="6I7O">
    <property type="method" value="EM"/>
    <property type="resolution" value="5.30 A"/>
    <property type="chains" value="BP/YP=2-120"/>
</dbReference>
<dbReference type="PDB" id="6M62">
    <property type="method" value="EM"/>
    <property type="resolution" value="3.20 A"/>
    <property type="chains" value="h=1-120"/>
</dbReference>
<dbReference type="PDB" id="6N8J">
    <property type="method" value="EM"/>
    <property type="resolution" value="3.50 A"/>
    <property type="chains" value="h=1-120"/>
</dbReference>
<dbReference type="PDB" id="6N8K">
    <property type="method" value="EM"/>
    <property type="resolution" value="3.60 A"/>
    <property type="chains" value="h=1-120"/>
</dbReference>
<dbReference type="PDB" id="6N8L">
    <property type="method" value="EM"/>
    <property type="resolution" value="3.60 A"/>
    <property type="chains" value="h=1-120"/>
</dbReference>
<dbReference type="PDB" id="6N8M">
    <property type="method" value="EM"/>
    <property type="resolution" value="3.50 A"/>
    <property type="chains" value="u=1-120"/>
</dbReference>
<dbReference type="PDB" id="6N8N">
    <property type="method" value="EM"/>
    <property type="resolution" value="3.80 A"/>
    <property type="chains" value="u=1-120"/>
</dbReference>
<dbReference type="PDB" id="6N8O">
    <property type="method" value="EM"/>
    <property type="resolution" value="3.50 A"/>
    <property type="chains" value="u=1-120"/>
</dbReference>
<dbReference type="PDB" id="6OIG">
    <property type="method" value="EM"/>
    <property type="resolution" value="3.80 A"/>
    <property type="chains" value="h=2-120"/>
</dbReference>
<dbReference type="PDB" id="6Q8Y">
    <property type="method" value="EM"/>
    <property type="resolution" value="3.10 A"/>
    <property type="chains" value="BP=2-120"/>
</dbReference>
<dbReference type="PDB" id="6QIK">
    <property type="method" value="EM"/>
    <property type="resolution" value="3.10 A"/>
    <property type="chains" value="Z=1-120"/>
</dbReference>
<dbReference type="PDB" id="6QT0">
    <property type="method" value="EM"/>
    <property type="resolution" value="3.40 A"/>
    <property type="chains" value="Z=1-120"/>
</dbReference>
<dbReference type="PDB" id="6QTZ">
    <property type="method" value="EM"/>
    <property type="resolution" value="3.50 A"/>
    <property type="chains" value="Z=1-120"/>
</dbReference>
<dbReference type="PDB" id="6R84">
    <property type="method" value="EM"/>
    <property type="resolution" value="3.60 A"/>
    <property type="chains" value="j=2-120"/>
</dbReference>
<dbReference type="PDB" id="6R86">
    <property type="method" value="EM"/>
    <property type="resolution" value="3.40 A"/>
    <property type="chains" value="j=2-120"/>
</dbReference>
<dbReference type="PDB" id="6R87">
    <property type="method" value="EM"/>
    <property type="resolution" value="3.40 A"/>
    <property type="chains" value="j=2-120"/>
</dbReference>
<dbReference type="PDB" id="6RI5">
    <property type="method" value="EM"/>
    <property type="resolution" value="3.30 A"/>
    <property type="chains" value="Z=1-120"/>
</dbReference>
<dbReference type="PDB" id="6RZZ">
    <property type="method" value="EM"/>
    <property type="resolution" value="3.20 A"/>
    <property type="chains" value="Z=1-120"/>
</dbReference>
<dbReference type="PDB" id="6S05">
    <property type="method" value="EM"/>
    <property type="resolution" value="3.90 A"/>
    <property type="chains" value="Z=1-120"/>
</dbReference>
<dbReference type="PDB" id="6S47">
    <property type="method" value="EM"/>
    <property type="resolution" value="3.28 A"/>
    <property type="chains" value="Aj=2-120"/>
</dbReference>
<dbReference type="PDB" id="6SNT">
    <property type="method" value="EM"/>
    <property type="resolution" value="2.80 A"/>
    <property type="chains" value="ai=1-120"/>
</dbReference>
<dbReference type="PDB" id="6SV4">
    <property type="method" value="EM"/>
    <property type="resolution" value="3.30 A"/>
    <property type="chains" value="BP/YP/ZP=1-120"/>
</dbReference>
<dbReference type="PDB" id="6T4Q">
    <property type="method" value="EM"/>
    <property type="resolution" value="2.60 A"/>
    <property type="chains" value="Lh=2-120"/>
</dbReference>
<dbReference type="PDB" id="6T7I">
    <property type="method" value="EM"/>
    <property type="resolution" value="3.20 A"/>
    <property type="chains" value="Lh=1-120"/>
</dbReference>
<dbReference type="PDB" id="6T7T">
    <property type="method" value="EM"/>
    <property type="resolution" value="3.10 A"/>
    <property type="chains" value="Lh=1-120"/>
</dbReference>
<dbReference type="PDB" id="6T83">
    <property type="method" value="EM"/>
    <property type="resolution" value="4.00 A"/>
    <property type="chains" value="S/hb=1-120"/>
</dbReference>
<dbReference type="PDB" id="6TB3">
    <property type="method" value="EM"/>
    <property type="resolution" value="2.80 A"/>
    <property type="chains" value="BP=2-120"/>
</dbReference>
<dbReference type="PDB" id="6TNU">
    <property type="method" value="EM"/>
    <property type="resolution" value="3.10 A"/>
    <property type="chains" value="BP=2-120"/>
</dbReference>
<dbReference type="PDB" id="6WOO">
    <property type="method" value="EM"/>
    <property type="resolution" value="2.90 A"/>
    <property type="chains" value="h=3-118"/>
</dbReference>
<dbReference type="PDB" id="6XIQ">
    <property type="method" value="EM"/>
    <property type="resolution" value="4.20 A"/>
    <property type="chains" value="h=1-120"/>
</dbReference>
<dbReference type="PDB" id="6XIR">
    <property type="method" value="EM"/>
    <property type="resolution" value="3.20 A"/>
    <property type="chains" value="h=1-120"/>
</dbReference>
<dbReference type="PDB" id="6YLG">
    <property type="method" value="EM"/>
    <property type="resolution" value="3.00 A"/>
    <property type="chains" value="h=1-120"/>
</dbReference>
<dbReference type="PDB" id="6YLH">
    <property type="method" value="EM"/>
    <property type="resolution" value="3.10 A"/>
    <property type="chains" value="h=1-120"/>
</dbReference>
<dbReference type="PDB" id="6YLX">
    <property type="method" value="EM"/>
    <property type="resolution" value="3.90 A"/>
    <property type="chains" value="h=1-120"/>
</dbReference>
<dbReference type="PDB" id="6YLY">
    <property type="method" value="EM"/>
    <property type="resolution" value="3.80 A"/>
    <property type="chains" value="h=1-120"/>
</dbReference>
<dbReference type="PDB" id="6Z6J">
    <property type="method" value="EM"/>
    <property type="resolution" value="3.40 A"/>
    <property type="chains" value="Lh=1-120"/>
</dbReference>
<dbReference type="PDB" id="6Z6K">
    <property type="method" value="EM"/>
    <property type="resolution" value="3.40 A"/>
    <property type="chains" value="Lh=1-120"/>
</dbReference>
<dbReference type="PDB" id="7AZY">
    <property type="method" value="EM"/>
    <property type="resolution" value="2.88 A"/>
    <property type="chains" value="D=1-120"/>
</dbReference>
<dbReference type="PDB" id="7B7D">
    <property type="method" value="EM"/>
    <property type="resolution" value="3.30 A"/>
    <property type="chains" value="Ld=2-120"/>
</dbReference>
<dbReference type="PDB" id="7BT6">
    <property type="method" value="EM"/>
    <property type="resolution" value="3.12 A"/>
    <property type="chains" value="h=1-120"/>
</dbReference>
<dbReference type="PDB" id="7BTB">
    <property type="method" value="EM"/>
    <property type="resolution" value="3.22 A"/>
    <property type="chains" value="h=1-120"/>
</dbReference>
<dbReference type="PDB" id="7MPI">
    <property type="method" value="EM"/>
    <property type="resolution" value="3.05 A"/>
    <property type="chains" value="Ah=2-120"/>
</dbReference>
<dbReference type="PDB" id="7MPJ">
    <property type="method" value="EM"/>
    <property type="resolution" value="2.70 A"/>
    <property type="chains" value="Ah=2-120"/>
</dbReference>
<dbReference type="PDB" id="7N8B">
    <property type="method" value="EM"/>
    <property type="resolution" value="3.05 A"/>
    <property type="chains" value="Ah=2-120"/>
</dbReference>
<dbReference type="PDB" id="7NAC">
    <property type="method" value="EM"/>
    <property type="resolution" value="3.04 A"/>
    <property type="chains" value="h=1-120"/>
</dbReference>
<dbReference type="PDB" id="7NRC">
    <property type="method" value="EM"/>
    <property type="resolution" value="3.90 A"/>
    <property type="chains" value="Lj=2-120"/>
</dbReference>
<dbReference type="PDB" id="7NRD">
    <property type="method" value="EM"/>
    <property type="resolution" value="4.36 A"/>
    <property type="chains" value="Lj=2-120"/>
</dbReference>
<dbReference type="PDB" id="7OF1">
    <property type="method" value="EM"/>
    <property type="resolution" value="3.10 A"/>
    <property type="chains" value="h=1-120"/>
</dbReference>
<dbReference type="PDB" id="7OH3">
    <property type="method" value="EM"/>
    <property type="resolution" value="3.40 A"/>
    <property type="chains" value="h=1-120"/>
</dbReference>
<dbReference type="PDB" id="7OHP">
    <property type="method" value="EM"/>
    <property type="resolution" value="3.90 A"/>
    <property type="chains" value="h=1-120"/>
</dbReference>
<dbReference type="PDB" id="7OHQ">
    <property type="method" value="EM"/>
    <property type="resolution" value="3.10 A"/>
    <property type="chains" value="h=1-120"/>
</dbReference>
<dbReference type="PDB" id="7OHR">
    <property type="method" value="EM"/>
    <property type="resolution" value="4.72 A"/>
    <property type="chains" value="h=1-120"/>
</dbReference>
<dbReference type="PDB" id="7OHS">
    <property type="method" value="EM"/>
    <property type="resolution" value="4.38 A"/>
    <property type="chains" value="h=1-120"/>
</dbReference>
<dbReference type="PDB" id="7OHU">
    <property type="method" value="EM"/>
    <property type="resolution" value="3.70 A"/>
    <property type="chains" value="h=1-120"/>
</dbReference>
<dbReference type="PDB" id="7OHV">
    <property type="method" value="EM"/>
    <property type="resolution" value="3.90 A"/>
    <property type="chains" value="h=1-120"/>
</dbReference>
<dbReference type="PDB" id="7OHW">
    <property type="method" value="EM"/>
    <property type="resolution" value="3.50 A"/>
    <property type="chains" value="h=1-120"/>
</dbReference>
<dbReference type="PDB" id="7OHX">
    <property type="method" value="EM"/>
    <property type="resolution" value="3.30 A"/>
    <property type="chains" value="h=1-120"/>
</dbReference>
<dbReference type="PDB" id="7OHY">
    <property type="method" value="EM"/>
    <property type="resolution" value="3.90 A"/>
    <property type="chains" value="h=1-120"/>
</dbReference>
<dbReference type="PDB" id="7R6Q">
    <property type="method" value="EM"/>
    <property type="resolution" value="2.98 A"/>
    <property type="chains" value="h=99-110"/>
</dbReference>
<dbReference type="PDB" id="7R7A">
    <property type="method" value="EM"/>
    <property type="resolution" value="3.04 A"/>
    <property type="chains" value="h=1-120"/>
</dbReference>
<dbReference type="PDB" id="7TOO">
    <property type="method" value="EM"/>
    <property type="resolution" value="2.70 A"/>
    <property type="chains" value="AL35=1-120"/>
</dbReference>
<dbReference type="PDB" id="7TOP">
    <property type="method" value="EM"/>
    <property type="resolution" value="2.40 A"/>
    <property type="chains" value="AL35=1-120"/>
</dbReference>
<dbReference type="PDB" id="7U0H">
    <property type="method" value="EM"/>
    <property type="resolution" value="2.76 A"/>
    <property type="chains" value="h=1-120"/>
</dbReference>
<dbReference type="PDB" id="7UG6">
    <property type="method" value="EM"/>
    <property type="resolution" value="2.90 A"/>
    <property type="chains" value="h=1-120"/>
</dbReference>
<dbReference type="PDB" id="7UOO">
    <property type="method" value="EM"/>
    <property type="resolution" value="2.34 A"/>
    <property type="chains" value="h=1-120"/>
</dbReference>
<dbReference type="PDB" id="7UQB">
    <property type="method" value="EM"/>
    <property type="resolution" value="2.43 A"/>
    <property type="chains" value="h=1-120"/>
</dbReference>
<dbReference type="PDB" id="7UQZ">
    <property type="method" value="EM"/>
    <property type="resolution" value="2.44 A"/>
    <property type="chains" value="h=1-120"/>
</dbReference>
<dbReference type="PDB" id="7V08">
    <property type="method" value="EM"/>
    <property type="resolution" value="2.36 A"/>
    <property type="chains" value="h=1-120"/>
</dbReference>
<dbReference type="PDB" id="7Z34">
    <property type="method" value="EM"/>
    <property type="resolution" value="3.80 A"/>
    <property type="chains" value="h=1-120"/>
</dbReference>
<dbReference type="PDB" id="7ZPQ">
    <property type="method" value="EM"/>
    <property type="resolution" value="3.47 A"/>
    <property type="chains" value="Bg=2-120"/>
</dbReference>
<dbReference type="PDB" id="7ZRS">
    <property type="method" value="EM"/>
    <property type="resolution" value="4.80 A"/>
    <property type="chains" value="Bg=2-120"/>
</dbReference>
<dbReference type="PDB" id="7ZS5">
    <property type="method" value="EM"/>
    <property type="resolution" value="3.20 A"/>
    <property type="chains" value="Bi=2-120"/>
</dbReference>
<dbReference type="PDB" id="7ZUW">
    <property type="method" value="EM"/>
    <property type="resolution" value="4.30 A"/>
    <property type="chains" value="Bg=2-120"/>
</dbReference>
<dbReference type="PDB" id="7ZUX">
    <property type="method" value="EM"/>
    <property type="resolution" value="2.50 A"/>
    <property type="chains" value="Eg=2-120"/>
</dbReference>
<dbReference type="PDB" id="7ZW0">
    <property type="method" value="EM"/>
    <property type="resolution" value="2.40 A"/>
    <property type="chains" value="Lk=1-120"/>
</dbReference>
<dbReference type="PDB" id="8AAF">
    <property type="method" value="EM"/>
    <property type="resolution" value="2.50 A"/>
    <property type="chains" value="U=1-120"/>
</dbReference>
<dbReference type="PDB" id="8AGT">
    <property type="method" value="EM"/>
    <property type="resolution" value="2.60 A"/>
    <property type="chains" value="U=1-120"/>
</dbReference>
<dbReference type="PDB" id="8AGU">
    <property type="method" value="EM"/>
    <property type="resolution" value="2.70 A"/>
    <property type="chains" value="U=1-120"/>
</dbReference>
<dbReference type="PDB" id="8AGV">
    <property type="method" value="EM"/>
    <property type="resolution" value="2.60 A"/>
    <property type="chains" value="U=1-120"/>
</dbReference>
<dbReference type="PDB" id="8AGW">
    <property type="method" value="EM"/>
    <property type="resolution" value="2.60 A"/>
    <property type="chains" value="U=1-120"/>
</dbReference>
<dbReference type="PDB" id="8AGX">
    <property type="method" value="EM"/>
    <property type="resolution" value="2.40 A"/>
    <property type="chains" value="U=1-120"/>
</dbReference>
<dbReference type="PDB" id="8AGZ">
    <property type="method" value="EM"/>
    <property type="resolution" value="2.60 A"/>
    <property type="chains" value="U=1-120"/>
</dbReference>
<dbReference type="PDB" id="8BIP">
    <property type="method" value="EM"/>
    <property type="resolution" value="3.10 A"/>
    <property type="chains" value="Lh=2-120"/>
</dbReference>
<dbReference type="PDB" id="8BJQ">
    <property type="method" value="EM"/>
    <property type="resolution" value="3.80 A"/>
    <property type="chains" value="Lh=2-120"/>
</dbReference>
<dbReference type="PDB" id="8BN3">
    <property type="method" value="EM"/>
    <property type="resolution" value="2.40 A"/>
    <property type="chains" value="O5=2-120"/>
</dbReference>
<dbReference type="PDB" id="8BQD">
    <property type="method" value="EM"/>
    <property type="resolution" value="3.90 A"/>
    <property type="chains" value="BP=2-120"/>
</dbReference>
<dbReference type="PDB" id="8BQX">
    <property type="method" value="EM"/>
    <property type="resolution" value="3.80 A"/>
    <property type="chains" value="BP=2-120"/>
</dbReference>
<dbReference type="PDB" id="8CCS">
    <property type="method" value="EM"/>
    <property type="resolution" value="1.97 A"/>
    <property type="chains" value="T=1-120"/>
</dbReference>
<dbReference type="PDB" id="8CDL">
    <property type="method" value="EM"/>
    <property type="resolution" value="2.72 A"/>
    <property type="chains" value="T=1-120"/>
</dbReference>
<dbReference type="PDB" id="8CDR">
    <property type="method" value="EM"/>
    <property type="resolution" value="2.04 A"/>
    <property type="chains" value="T=1-120"/>
</dbReference>
<dbReference type="PDB" id="8CEH">
    <property type="method" value="EM"/>
    <property type="resolution" value="2.05 A"/>
    <property type="chains" value="T=1-120"/>
</dbReference>
<dbReference type="PDB" id="8CF5">
    <property type="method" value="EM"/>
    <property type="resolution" value="2.71 A"/>
    <property type="chains" value="T=1-120"/>
</dbReference>
<dbReference type="PDB" id="8CG8">
    <property type="method" value="EM"/>
    <property type="resolution" value="2.57 A"/>
    <property type="chains" value="T=1-120"/>
</dbReference>
<dbReference type="PDB" id="8CGN">
    <property type="method" value="EM"/>
    <property type="resolution" value="2.28 A"/>
    <property type="chains" value="T=1-120"/>
</dbReference>
<dbReference type="PDB" id="8CIV">
    <property type="method" value="EM"/>
    <property type="resolution" value="2.47 A"/>
    <property type="chains" value="T=1-120"/>
</dbReference>
<dbReference type="PDB" id="8CKU">
    <property type="method" value="EM"/>
    <property type="resolution" value="3.11 A"/>
    <property type="chains" value="T=1-120"/>
</dbReference>
<dbReference type="PDB" id="8CMJ">
    <property type="method" value="EM"/>
    <property type="resolution" value="3.79 A"/>
    <property type="chains" value="T=1-120"/>
</dbReference>
<dbReference type="PDB" id="8EUB">
    <property type="method" value="EM"/>
    <property type="resolution" value="2.52 A"/>
    <property type="chains" value="Ah=1-120"/>
</dbReference>
<dbReference type="PDB" id="8EVP">
    <property type="method" value="EM"/>
    <property type="resolution" value="2.38 A"/>
    <property type="chains" value="Ah=1-120"/>
</dbReference>
<dbReference type="PDB" id="8EVQ">
    <property type="method" value="EM"/>
    <property type="resolution" value="2.72 A"/>
    <property type="chains" value="Ah=1-120"/>
</dbReference>
<dbReference type="PDB" id="8EVR">
    <property type="method" value="EM"/>
    <property type="resolution" value="2.87 A"/>
    <property type="chains" value="Ah=1-120"/>
</dbReference>
<dbReference type="PDB" id="8EVS">
    <property type="method" value="EM"/>
    <property type="resolution" value="2.62 A"/>
    <property type="chains" value="Ah=1-120"/>
</dbReference>
<dbReference type="PDB" id="8EVT">
    <property type="method" value="EM"/>
    <property type="resolution" value="2.20 A"/>
    <property type="chains" value="Ah=1-120"/>
</dbReference>
<dbReference type="PDB" id="8EWB">
    <property type="method" value="EM"/>
    <property type="resolution" value="2.87 A"/>
    <property type="chains" value="Ah=1-120"/>
</dbReference>
<dbReference type="PDB" id="8EWC">
    <property type="method" value="EM"/>
    <property type="resolution" value="2.45 A"/>
    <property type="chains" value="Ah=1-120"/>
</dbReference>
<dbReference type="PDB" id="8HFR">
    <property type="method" value="EM"/>
    <property type="resolution" value="2.64 A"/>
    <property type="chains" value="h1=1-120"/>
</dbReference>
<dbReference type="PDB" id="8K2D">
    <property type="method" value="EM"/>
    <property type="resolution" value="3.20 A"/>
    <property type="chains" value="Lh=1-120"/>
</dbReference>
<dbReference type="PDB" id="8K82">
    <property type="method" value="EM"/>
    <property type="resolution" value="3.00 A"/>
    <property type="chains" value="Lh=1-120"/>
</dbReference>
<dbReference type="PDB" id="8P4V">
    <property type="method" value="X-ray"/>
    <property type="resolution" value="3.16 A"/>
    <property type="chains" value="AI/DJ=1-120"/>
</dbReference>
<dbReference type="PDB" id="8P8M">
    <property type="method" value="EM"/>
    <property type="resolution" value="2.66 A"/>
    <property type="chains" value="RH=1-120"/>
</dbReference>
<dbReference type="PDB" id="8P8N">
    <property type="method" value="EM"/>
    <property type="resolution" value="2.15 A"/>
    <property type="chains" value="RH=1-120"/>
</dbReference>
<dbReference type="PDB" id="8P8U">
    <property type="method" value="EM"/>
    <property type="resolution" value="2.23 A"/>
    <property type="chains" value="RH=1-120"/>
</dbReference>
<dbReference type="PDB" id="8P9A">
    <property type="method" value="X-ray"/>
    <property type="resolution" value="2.90 A"/>
    <property type="chains" value="AI/DJ=1-120"/>
</dbReference>
<dbReference type="PDB" id="8PFR">
    <property type="method" value="EM"/>
    <property type="resolution" value="2.15 A"/>
    <property type="chains" value="RH=1-120"/>
</dbReference>
<dbReference type="PDB" id="8T2X">
    <property type="method" value="EM"/>
    <property type="resolution" value="2.46 A"/>
    <property type="chains" value="Ah=1-120"/>
</dbReference>
<dbReference type="PDB" id="8T2Y">
    <property type="method" value="EM"/>
    <property type="resolution" value="2.20 A"/>
    <property type="chains" value="Ah=1-120"/>
</dbReference>
<dbReference type="PDB" id="8T2Z">
    <property type="method" value="EM"/>
    <property type="resolution" value="2.40 A"/>
    <property type="chains" value="Ah=1-120"/>
</dbReference>
<dbReference type="PDB" id="8T30">
    <property type="method" value="EM"/>
    <property type="resolution" value="2.88 A"/>
    <property type="chains" value="Ah=1-120"/>
</dbReference>
<dbReference type="PDB" id="8T3A">
    <property type="method" value="EM"/>
    <property type="resolution" value="2.86 A"/>
    <property type="chains" value="Ah=1-120"/>
</dbReference>
<dbReference type="PDB" id="8T3B">
    <property type="method" value="EM"/>
    <property type="resolution" value="3.08 A"/>
    <property type="chains" value="Ah=1-120"/>
</dbReference>
<dbReference type="PDB" id="8T3C">
    <property type="method" value="EM"/>
    <property type="resolution" value="3.86 A"/>
    <property type="chains" value="Ah=1-120"/>
</dbReference>
<dbReference type="PDB" id="8T3D">
    <property type="method" value="EM"/>
    <property type="resolution" value="2.95 A"/>
    <property type="chains" value="Ah=1-120"/>
</dbReference>
<dbReference type="PDB" id="8T3E">
    <property type="method" value="EM"/>
    <property type="resolution" value="3.04 A"/>
    <property type="chains" value="Ah=1-120"/>
</dbReference>
<dbReference type="PDB" id="8T3F">
    <property type="method" value="EM"/>
    <property type="resolution" value="3.09 A"/>
    <property type="chains" value="Ah=1-120"/>
</dbReference>
<dbReference type="PDB" id="8UT0">
    <property type="method" value="EM"/>
    <property type="resolution" value="3.22 A"/>
    <property type="chains" value="Lj=2-120"/>
</dbReference>
<dbReference type="PDB" id="8UTI">
    <property type="method" value="EM"/>
    <property type="resolution" value="3.13 A"/>
    <property type="chains" value="Lj=2-120"/>
</dbReference>
<dbReference type="PDB" id="8V83">
    <property type="method" value="EM"/>
    <property type="resolution" value="2.53 A"/>
    <property type="chains" value="h=1-120"/>
</dbReference>
<dbReference type="PDB" id="8V84">
    <property type="method" value="EM"/>
    <property type="resolution" value="2.70 A"/>
    <property type="chains" value="h=1-120"/>
</dbReference>
<dbReference type="PDB" id="8V87">
    <property type="method" value="EM"/>
    <property type="resolution" value="2.66 A"/>
    <property type="chains" value="h=1-120"/>
</dbReference>
<dbReference type="PDB" id="8XU8">
    <property type="method" value="EM"/>
    <property type="resolution" value="3.40 A"/>
    <property type="chains" value="j=2-120"/>
</dbReference>
<dbReference type="PDB" id="8Y0U">
    <property type="method" value="EM"/>
    <property type="resolution" value="3.59 A"/>
    <property type="chains" value="Lh=1-120"/>
</dbReference>
<dbReference type="PDB" id="8YLD">
    <property type="method" value="EM"/>
    <property type="resolution" value="3.90 A"/>
    <property type="chains" value="j=2-120"/>
</dbReference>
<dbReference type="PDB" id="8YLR">
    <property type="method" value="EM"/>
    <property type="resolution" value="3.90 A"/>
    <property type="chains" value="j=2-120"/>
</dbReference>
<dbReference type="PDB" id="8Z70">
    <property type="method" value="EM"/>
    <property type="resolution" value="3.20 A"/>
    <property type="chains" value="j=2-120"/>
</dbReference>
<dbReference type="PDB" id="8Z71">
    <property type="method" value="EM"/>
    <property type="resolution" value="3.60 A"/>
    <property type="chains" value="j=2-120"/>
</dbReference>
<dbReference type="PDB" id="9F9S">
    <property type="method" value="EM"/>
    <property type="resolution" value="2.90 A"/>
    <property type="chains" value="Lj/Mj=1-120"/>
</dbReference>
<dbReference type="PDBsum" id="2WW9"/>
<dbReference type="PDBsum" id="2WWA"/>
<dbReference type="PDBsum" id="2WWB"/>
<dbReference type="PDBsum" id="3J6X"/>
<dbReference type="PDBsum" id="3J6Y"/>
<dbReference type="PDBsum" id="3J77"/>
<dbReference type="PDBsum" id="3J78"/>
<dbReference type="PDBsum" id="3JCT"/>
<dbReference type="PDBsum" id="4U3M"/>
<dbReference type="PDBsum" id="4U3N"/>
<dbReference type="PDBsum" id="4U3U"/>
<dbReference type="PDBsum" id="4U4N"/>
<dbReference type="PDBsum" id="4U4O"/>
<dbReference type="PDBsum" id="4U4Q"/>
<dbReference type="PDBsum" id="4U4R"/>
<dbReference type="PDBsum" id="4U4U"/>
<dbReference type="PDBsum" id="4U4Y"/>
<dbReference type="PDBsum" id="4U4Z"/>
<dbReference type="PDBsum" id="4U50"/>
<dbReference type="PDBsum" id="4U51"/>
<dbReference type="PDBsum" id="4U52"/>
<dbReference type="PDBsum" id="4U53"/>
<dbReference type="PDBsum" id="4U55"/>
<dbReference type="PDBsum" id="4U56"/>
<dbReference type="PDBsum" id="4U6F"/>
<dbReference type="PDBsum" id="4V4B"/>
<dbReference type="PDBsum" id="4V6I"/>
<dbReference type="PDBsum" id="4V7F"/>
<dbReference type="PDBsum" id="4V7R"/>
<dbReference type="PDBsum" id="4V88"/>
<dbReference type="PDBsum" id="4V8T"/>
<dbReference type="PDBsum" id="4V91"/>
<dbReference type="PDBsum" id="5APN"/>
<dbReference type="PDBsum" id="5APO"/>
<dbReference type="PDBsum" id="5DAT"/>
<dbReference type="PDBsum" id="5DC3"/>
<dbReference type="PDBsum" id="5DGE"/>
<dbReference type="PDBsum" id="5DGF"/>
<dbReference type="PDBsum" id="5DGV"/>
<dbReference type="PDBsum" id="5FCI"/>
<dbReference type="PDBsum" id="5FCJ"/>
<dbReference type="PDBsum" id="5GAK"/>
<dbReference type="PDBsum" id="5H4P"/>
<dbReference type="PDBsum" id="5I4L"/>
<dbReference type="PDBsum" id="5JCS"/>
<dbReference type="PDBsum" id="5JUO"/>
<dbReference type="PDBsum" id="5JUP"/>
<dbReference type="PDBsum" id="5JUS"/>
<dbReference type="PDBsum" id="5JUT"/>
<dbReference type="PDBsum" id="5JUU"/>
<dbReference type="PDBsum" id="5LYB"/>
<dbReference type="PDBsum" id="5M1J"/>
<dbReference type="PDBsum" id="5MC6"/>
<dbReference type="PDBsum" id="5MEI"/>
<dbReference type="PDBsum" id="5NDG"/>
<dbReference type="PDBsum" id="5NDV"/>
<dbReference type="PDBsum" id="5NDW"/>
<dbReference type="PDBsum" id="5OBM"/>
<dbReference type="PDBsum" id="5ON6"/>
<dbReference type="PDBsum" id="5T62"/>
<dbReference type="PDBsum" id="5T6R"/>
<dbReference type="PDBsum" id="5TBW"/>
<dbReference type="PDBsum" id="5TGA"/>
<dbReference type="PDBsum" id="5TGM"/>
<dbReference type="PDBsum" id="5Z3G"/>
<dbReference type="PDBsum" id="6C0F"/>
<dbReference type="PDBsum" id="6CB1"/>
<dbReference type="PDBsum" id="6ELZ"/>
<dbReference type="PDBsum" id="6EM1"/>
<dbReference type="PDBsum" id="6EM3"/>
<dbReference type="PDBsum" id="6EM4"/>
<dbReference type="PDBsum" id="6EM5"/>
<dbReference type="PDBsum" id="6FT6"/>
<dbReference type="PDBsum" id="6GQ1"/>
<dbReference type="PDBsum" id="6GQB"/>
<dbReference type="PDBsum" id="6GQV"/>
<dbReference type="PDBsum" id="6HD7"/>
<dbReference type="PDBsum" id="6HHQ"/>
<dbReference type="PDBsum" id="6I7O"/>
<dbReference type="PDBsum" id="6M62"/>
<dbReference type="PDBsum" id="6N8J"/>
<dbReference type="PDBsum" id="6N8K"/>
<dbReference type="PDBsum" id="6N8L"/>
<dbReference type="PDBsum" id="6N8M"/>
<dbReference type="PDBsum" id="6N8N"/>
<dbReference type="PDBsum" id="6N8O"/>
<dbReference type="PDBsum" id="6OIG"/>
<dbReference type="PDBsum" id="6Q8Y"/>
<dbReference type="PDBsum" id="6QIK"/>
<dbReference type="PDBsum" id="6QT0"/>
<dbReference type="PDBsum" id="6QTZ"/>
<dbReference type="PDBsum" id="6R84"/>
<dbReference type="PDBsum" id="6R86"/>
<dbReference type="PDBsum" id="6R87"/>
<dbReference type="PDBsum" id="6RI5"/>
<dbReference type="PDBsum" id="6RZZ"/>
<dbReference type="PDBsum" id="6S05"/>
<dbReference type="PDBsum" id="6S47"/>
<dbReference type="PDBsum" id="6SNT"/>
<dbReference type="PDBsum" id="6SV4"/>
<dbReference type="PDBsum" id="6T4Q"/>
<dbReference type="PDBsum" id="6T7I"/>
<dbReference type="PDBsum" id="6T7T"/>
<dbReference type="PDBsum" id="6T83"/>
<dbReference type="PDBsum" id="6TB3"/>
<dbReference type="PDBsum" id="6TNU"/>
<dbReference type="PDBsum" id="6WOO"/>
<dbReference type="PDBsum" id="6XIQ"/>
<dbReference type="PDBsum" id="6XIR"/>
<dbReference type="PDBsum" id="6YLG"/>
<dbReference type="PDBsum" id="6YLH"/>
<dbReference type="PDBsum" id="6YLX"/>
<dbReference type="PDBsum" id="6YLY"/>
<dbReference type="PDBsum" id="6Z6J"/>
<dbReference type="PDBsum" id="6Z6K"/>
<dbReference type="PDBsum" id="7AZY"/>
<dbReference type="PDBsum" id="7B7D"/>
<dbReference type="PDBsum" id="7BT6"/>
<dbReference type="PDBsum" id="7BTB"/>
<dbReference type="PDBsum" id="7MPI"/>
<dbReference type="PDBsum" id="7MPJ"/>
<dbReference type="PDBsum" id="7N8B"/>
<dbReference type="PDBsum" id="7NAC"/>
<dbReference type="PDBsum" id="7NRC"/>
<dbReference type="PDBsum" id="7NRD"/>
<dbReference type="PDBsum" id="7OF1"/>
<dbReference type="PDBsum" id="7OH3"/>
<dbReference type="PDBsum" id="7OHP"/>
<dbReference type="PDBsum" id="7OHQ"/>
<dbReference type="PDBsum" id="7OHR"/>
<dbReference type="PDBsum" id="7OHS"/>
<dbReference type="PDBsum" id="7OHU"/>
<dbReference type="PDBsum" id="7OHV"/>
<dbReference type="PDBsum" id="7OHW"/>
<dbReference type="PDBsum" id="7OHX"/>
<dbReference type="PDBsum" id="7OHY"/>
<dbReference type="PDBsum" id="7R6Q"/>
<dbReference type="PDBsum" id="7R7A"/>
<dbReference type="PDBsum" id="7TOO"/>
<dbReference type="PDBsum" id="7TOP"/>
<dbReference type="PDBsum" id="7U0H"/>
<dbReference type="PDBsum" id="7UG6"/>
<dbReference type="PDBsum" id="7UOO"/>
<dbReference type="PDBsum" id="7UQB"/>
<dbReference type="PDBsum" id="7UQZ"/>
<dbReference type="PDBsum" id="7V08"/>
<dbReference type="PDBsum" id="7Z34"/>
<dbReference type="PDBsum" id="7ZPQ"/>
<dbReference type="PDBsum" id="7ZRS"/>
<dbReference type="PDBsum" id="7ZS5"/>
<dbReference type="PDBsum" id="7ZUW"/>
<dbReference type="PDBsum" id="7ZUX"/>
<dbReference type="PDBsum" id="7ZW0"/>
<dbReference type="PDBsum" id="8AAF"/>
<dbReference type="PDBsum" id="8AGT"/>
<dbReference type="PDBsum" id="8AGU"/>
<dbReference type="PDBsum" id="8AGV"/>
<dbReference type="PDBsum" id="8AGW"/>
<dbReference type="PDBsum" id="8AGX"/>
<dbReference type="PDBsum" id="8AGZ"/>
<dbReference type="PDBsum" id="8BIP"/>
<dbReference type="PDBsum" id="8BJQ"/>
<dbReference type="PDBsum" id="8BN3"/>
<dbReference type="PDBsum" id="8BQD"/>
<dbReference type="PDBsum" id="8BQX"/>
<dbReference type="PDBsum" id="8CCS"/>
<dbReference type="PDBsum" id="8CDL"/>
<dbReference type="PDBsum" id="8CDR"/>
<dbReference type="PDBsum" id="8CEH"/>
<dbReference type="PDBsum" id="8CF5"/>
<dbReference type="PDBsum" id="8CG8"/>
<dbReference type="PDBsum" id="8CGN"/>
<dbReference type="PDBsum" id="8CIV"/>
<dbReference type="PDBsum" id="8CKU"/>
<dbReference type="PDBsum" id="8CMJ"/>
<dbReference type="PDBsum" id="8EUB"/>
<dbReference type="PDBsum" id="8EVP"/>
<dbReference type="PDBsum" id="8EVQ"/>
<dbReference type="PDBsum" id="8EVR"/>
<dbReference type="PDBsum" id="8EVS"/>
<dbReference type="PDBsum" id="8EVT"/>
<dbReference type="PDBsum" id="8EWB"/>
<dbReference type="PDBsum" id="8EWC"/>
<dbReference type="PDBsum" id="8HFR"/>
<dbReference type="PDBsum" id="8K2D"/>
<dbReference type="PDBsum" id="8K82"/>
<dbReference type="PDBsum" id="8P4V"/>
<dbReference type="PDBsum" id="8P8M"/>
<dbReference type="PDBsum" id="8P8N"/>
<dbReference type="PDBsum" id="8P8U"/>
<dbReference type="PDBsum" id="8P9A"/>
<dbReference type="PDBsum" id="8PFR"/>
<dbReference type="PDBsum" id="8T2X"/>
<dbReference type="PDBsum" id="8T2Y"/>
<dbReference type="PDBsum" id="8T2Z"/>
<dbReference type="PDBsum" id="8T30"/>
<dbReference type="PDBsum" id="8T3A"/>
<dbReference type="PDBsum" id="8T3B"/>
<dbReference type="PDBsum" id="8T3C"/>
<dbReference type="PDBsum" id="8T3D"/>
<dbReference type="PDBsum" id="8T3E"/>
<dbReference type="PDBsum" id="8T3F"/>
<dbReference type="PDBsum" id="8UT0"/>
<dbReference type="PDBsum" id="8UTI"/>
<dbReference type="PDBsum" id="8V83"/>
<dbReference type="PDBsum" id="8V84"/>
<dbReference type="PDBsum" id="8V87"/>
<dbReference type="PDBsum" id="8XU8"/>
<dbReference type="PDBsum" id="8Y0U"/>
<dbReference type="PDBsum" id="8YLD"/>
<dbReference type="PDBsum" id="8YLR"/>
<dbReference type="PDBsum" id="8Z70"/>
<dbReference type="PDBsum" id="8Z71"/>
<dbReference type="PDBsum" id="9F9S"/>
<dbReference type="EMDB" id="EMD-0047"/>
<dbReference type="EMDB" id="EMD-0048"/>
<dbReference type="EMDB" id="EMD-0049"/>
<dbReference type="EMDB" id="EMD-0202"/>
<dbReference type="EMDB" id="EMD-0369"/>
<dbReference type="EMDB" id="EMD-0370"/>
<dbReference type="EMDB" id="EMD-0371"/>
<dbReference type="EMDB" id="EMD-0372"/>
<dbReference type="EMDB" id="EMD-0373"/>
<dbReference type="EMDB" id="EMD-0374"/>
<dbReference type="EMDB" id="EMD-10068"/>
<dbReference type="EMDB" id="EMD-10071"/>
<dbReference type="EMDB" id="EMD-10098"/>
<dbReference type="EMDB" id="EMD-10262"/>
<dbReference type="EMDB" id="EMD-10315"/>
<dbReference type="EMDB" id="EMD-10377"/>
<dbReference type="EMDB" id="EMD-10396"/>
<dbReference type="EMDB" id="EMD-10397"/>
<dbReference type="EMDB" id="EMD-10398"/>
<dbReference type="EMDB" id="EMD-10431"/>
<dbReference type="EMDB" id="EMD-10537"/>
<dbReference type="EMDB" id="EMD-10838"/>
<dbReference type="EMDB" id="EMD-10839"/>
<dbReference type="EMDB" id="EMD-10841"/>
<dbReference type="EMDB" id="EMD-10842"/>
<dbReference type="EMDB" id="EMD-11096"/>
<dbReference type="EMDB" id="EMD-11097"/>
<dbReference type="EMDB" id="EMD-11951"/>
<dbReference type="EMDB" id="EMD-12081"/>
<dbReference type="EMDB" id="EMD-12534"/>
<dbReference type="EMDB" id="EMD-12535"/>
<dbReference type="EMDB" id="EMD-12866"/>
<dbReference type="EMDB" id="EMD-12892"/>
<dbReference type="EMDB" id="EMD-12904"/>
<dbReference type="EMDB" id="EMD-12905"/>
<dbReference type="EMDB" id="EMD-12906"/>
<dbReference type="EMDB" id="EMD-12907"/>
<dbReference type="EMDB" id="EMD-12909"/>
<dbReference type="EMDB" id="EMD-12910"/>
<dbReference type="EMDB" id="EMD-12911"/>
<dbReference type="EMDB" id="EMD-12912"/>
<dbReference type="EMDB" id="EMD-12913"/>
<dbReference type="EMDB" id="EMD-14471"/>
<dbReference type="EMDB" id="EMD-14861"/>
<dbReference type="EMDB" id="EMD-14921"/>
<dbReference type="EMDB" id="EMD-14926"/>
<dbReference type="EMDB" id="EMD-14978"/>
<dbReference type="EMDB" id="EMD-14979"/>
<dbReference type="EMDB" id="EMD-14990"/>
<dbReference type="EMDB" id="EMD-15296"/>
<dbReference type="EMDB" id="EMD-15423"/>
<dbReference type="EMDB" id="EMD-15424"/>
<dbReference type="EMDB" id="EMD-15425"/>
<dbReference type="EMDB" id="EMD-15426"/>
<dbReference type="EMDB" id="EMD-15427"/>
<dbReference type="EMDB" id="EMD-15428"/>
<dbReference type="EMDB" id="EMD-16086"/>
<dbReference type="EMDB" id="EMD-16090"/>
<dbReference type="EMDB" id="EMD-16127"/>
<dbReference type="EMDB" id="EMD-16182"/>
<dbReference type="EMDB" id="EMD-16191"/>
<dbReference type="EMDB" id="EMD-16563"/>
<dbReference type="EMDB" id="EMD-16591"/>
<dbReference type="EMDB" id="EMD-16594"/>
<dbReference type="EMDB" id="EMD-16609"/>
<dbReference type="EMDB" id="EMD-16616"/>
<dbReference type="EMDB" id="EMD-16634"/>
<dbReference type="EMDB" id="EMD-16648"/>
<dbReference type="EMDB" id="EMD-16684"/>
<dbReference type="EMDB" id="EMD-16702"/>
<dbReference type="EMDB" id="EMD-16729"/>
<dbReference type="EMDB" id="EMD-17549"/>
<dbReference type="EMDB" id="EMD-17550"/>
<dbReference type="EMDB" id="EMD-17552"/>
<dbReference type="EMDB" id="EMD-17653"/>
<dbReference type="EMDB" id="EMD-20077"/>
<dbReference type="EMDB" id="EMD-21859"/>
<dbReference type="EMDB" id="EMD-22196"/>
<dbReference type="EMDB" id="EMD-22198"/>
<dbReference type="EMDB" id="EMD-23934"/>
<dbReference type="EMDB" id="EMD-23935"/>
<dbReference type="EMDB" id="EMD-24235"/>
<dbReference type="EMDB" id="EMD-24269"/>
<dbReference type="EMDB" id="EMD-24286"/>
<dbReference type="EMDB" id="EMD-24296"/>
<dbReference type="EMDB" id="EMD-26033"/>
<dbReference type="EMDB" id="EMD-26034"/>
<dbReference type="EMDB" id="EMD-26259"/>
<dbReference type="EMDB" id="EMD-26485"/>
<dbReference type="EMDB" id="EMD-26651"/>
<dbReference type="EMDB" id="EMD-26686"/>
<dbReference type="EMDB" id="EMD-26703"/>
<dbReference type="EMDB" id="EMD-26941"/>
<dbReference type="EMDB" id="EMD-28610"/>
<dbReference type="EMDB" id="EMD-28632"/>
<dbReference type="EMDB" id="EMD-28633"/>
<dbReference type="EMDB" id="EMD-28634"/>
<dbReference type="EMDB" id="EMD-28635"/>
<dbReference type="EMDB" id="EMD-28636"/>
<dbReference type="EMDB" id="EMD-28642"/>
<dbReference type="EMDB" id="EMD-28643"/>
<dbReference type="EMDB" id="EMD-30108"/>
<dbReference type="EMDB" id="EMD-30170"/>
<dbReference type="EMDB" id="EMD-30174"/>
<dbReference type="EMDB" id="EMD-3461"/>
<dbReference type="EMDB" id="EMD-34725"/>
<dbReference type="EMDB" id="EMD-36839"/>
<dbReference type="EMDB" id="EMD-36945"/>
<dbReference type="EMDB" id="EMD-38660"/>
<dbReference type="EMDB" id="EMD-40990"/>
<dbReference type="EMDB" id="EMD-40991"/>
<dbReference type="EMDB" id="EMD-40992"/>
<dbReference type="EMDB" id="EMD-40993"/>
<dbReference type="EMDB" id="EMD-40997"/>
<dbReference type="EMDB" id="EMD-40998"/>
<dbReference type="EMDB" id="EMD-40999"/>
<dbReference type="EMDB" id="EMD-41000"/>
<dbReference type="EMDB" id="EMD-41001"/>
<dbReference type="EMDB" id="EMD-41002"/>
<dbReference type="EMDB" id="EMD-4140"/>
<dbReference type="EMDB" id="EMD-42525"/>
<dbReference type="EMDB" id="EMD-42540"/>
<dbReference type="EMDB" id="EMD-43017"/>
<dbReference type="EMDB" id="EMD-4302"/>
<dbReference type="EMDB" id="EMD-43021"/>
<dbReference type="EMDB" id="EMD-43027"/>
<dbReference type="EMDB" id="EMD-4427"/>
<dbReference type="EMDB" id="EMD-4474"/>
<dbReference type="EMDB" id="EMD-4560"/>
<dbReference type="EMDB" id="EMD-4630"/>
<dbReference type="EMDB" id="EMD-4636"/>
<dbReference type="EMDB" id="EMD-4751"/>
<dbReference type="EMDB" id="EMD-4752"/>
<dbReference type="EMDB" id="EMD-4753"/>
<dbReference type="EMDB" id="EMD-4884"/>
<dbReference type="EMDB" id="EMD-50259"/>
<dbReference type="EMDB" id="EMD-6878"/>
<dbReference type="EMDB" id="EMD-7324"/>
<dbReference type="EMDB" id="EMD-8362"/>
<dbReference type="EMDB" id="EMD-8368"/>
<dbReference type="SMR" id="P0CX84"/>
<dbReference type="BioGRID" id="31854">
    <property type="interactions" value="352"/>
</dbReference>
<dbReference type="BioGRID" id="31925">
    <property type="interactions" value="262"/>
</dbReference>
<dbReference type="ComplexPortal" id="CPX-1601">
    <property type="entry name" value="60S cytosolic large ribosomal subunit"/>
</dbReference>
<dbReference type="FunCoup" id="P0CX84">
    <property type="interactions" value="1143"/>
</dbReference>
<dbReference type="IntAct" id="P0CX84">
    <property type="interactions" value="54"/>
</dbReference>
<dbReference type="MINT" id="P0CX84"/>
<dbReference type="STRING" id="4932.YDL136W"/>
<dbReference type="iPTMnet" id="P0CX84"/>
<dbReference type="PaxDb" id="4932-YDL136W"/>
<dbReference type="PeptideAtlas" id="P0CX84"/>
<dbReference type="EnsemblFungi" id="YDL136W_mRNA">
    <property type="protein sequence ID" value="YDL136W"/>
    <property type="gene ID" value="YDL136W"/>
</dbReference>
<dbReference type="EnsemblFungi" id="YDL191W_mRNA">
    <property type="protein sequence ID" value="YDL191W"/>
    <property type="gene ID" value="YDL191W"/>
</dbReference>
<dbReference type="GeneID" id="851336"/>
<dbReference type="KEGG" id="sce:YDL136W"/>
<dbReference type="KEGG" id="sce:YDL191W"/>
<dbReference type="AGR" id="SGD:S000002350"/>
<dbReference type="SGD" id="S000002350">
    <property type="gene designation" value="RPL35A"/>
</dbReference>
<dbReference type="VEuPathDB" id="FungiDB:YDL136W"/>
<dbReference type="VEuPathDB" id="FungiDB:YDL191W"/>
<dbReference type="eggNOG" id="KOG3436">
    <property type="taxonomic scope" value="Eukaryota"/>
</dbReference>
<dbReference type="HOGENOM" id="CLU_110381_1_1_1"/>
<dbReference type="InParanoid" id="P0CX84"/>
<dbReference type="OMA" id="VMNQKAR"/>
<dbReference type="OrthoDB" id="528635at2759"/>
<dbReference type="BioCyc" id="YEAST:G3O-29576-MONOMER"/>
<dbReference type="Reactome" id="R-SCE-156827">
    <property type="pathway name" value="L13a-mediated translational silencing of Ceruloplasmin expression"/>
</dbReference>
<dbReference type="Reactome" id="R-SCE-1799339">
    <property type="pathway name" value="SRP-dependent cotranslational protein targeting to membrane"/>
</dbReference>
<dbReference type="Reactome" id="R-SCE-72689">
    <property type="pathway name" value="Formation of a pool of free 40S subunits"/>
</dbReference>
<dbReference type="Reactome" id="R-SCE-72706">
    <property type="pathway name" value="GTP hydrolysis and joining of the 60S ribosomal subunit"/>
</dbReference>
<dbReference type="Reactome" id="R-SCE-975956">
    <property type="pathway name" value="Nonsense Mediated Decay (NMD) independent of the Exon Junction Complex (EJC)"/>
</dbReference>
<dbReference type="Reactome" id="R-SCE-975957">
    <property type="pathway name" value="Nonsense Mediated Decay (NMD) enhanced by the Exon Junction Complex (EJC)"/>
</dbReference>
<dbReference type="EvolutionaryTrace" id="P0CX84"/>
<dbReference type="PRO" id="PR:P0CX84"/>
<dbReference type="Proteomes" id="UP000002311">
    <property type="component" value="Chromosome IV"/>
</dbReference>
<dbReference type="RNAct" id="P0CX84">
    <property type="molecule type" value="protein"/>
</dbReference>
<dbReference type="ExpressionAtlas" id="P0CX84">
    <property type="expression patterns" value="baseline and differential"/>
</dbReference>
<dbReference type="GO" id="GO:0005829">
    <property type="term" value="C:cytosol"/>
    <property type="evidence" value="ECO:0000304"/>
    <property type="project" value="Reactome"/>
</dbReference>
<dbReference type="GO" id="GO:0022625">
    <property type="term" value="C:cytosolic large ribosomal subunit"/>
    <property type="evidence" value="ECO:0000314"/>
    <property type="project" value="SGD"/>
</dbReference>
<dbReference type="GO" id="GO:0030687">
    <property type="term" value="C:preribosome, large subunit precursor"/>
    <property type="evidence" value="ECO:0000314"/>
    <property type="project" value="SGD"/>
</dbReference>
<dbReference type="GO" id="GO:0003729">
    <property type="term" value="F:mRNA binding"/>
    <property type="evidence" value="ECO:0000318"/>
    <property type="project" value="GO_Central"/>
</dbReference>
<dbReference type="GO" id="GO:0003735">
    <property type="term" value="F:structural constituent of ribosome"/>
    <property type="evidence" value="ECO:0000318"/>
    <property type="project" value="GO_Central"/>
</dbReference>
<dbReference type="GO" id="GO:0002181">
    <property type="term" value="P:cytoplasmic translation"/>
    <property type="evidence" value="ECO:0000305"/>
    <property type="project" value="SGD"/>
</dbReference>
<dbReference type="GO" id="GO:0000463">
    <property type="term" value="P:maturation of LSU-rRNA from tricistronic rRNA transcript (SSU-rRNA, 5.8S rRNA, LSU-rRNA)"/>
    <property type="evidence" value="ECO:0000315"/>
    <property type="project" value="SGD"/>
</dbReference>
<dbReference type="CDD" id="cd00427">
    <property type="entry name" value="Ribosomal_L29_HIP"/>
    <property type="match status" value="1"/>
</dbReference>
<dbReference type="FunFam" id="1.10.287.310:FF:000002">
    <property type="entry name" value="60S ribosomal protein L35"/>
    <property type="match status" value="1"/>
</dbReference>
<dbReference type="FunFam" id="6.10.250.3450:FF:000001">
    <property type="entry name" value="60S ribosomal protein L35"/>
    <property type="match status" value="1"/>
</dbReference>
<dbReference type="Gene3D" id="1.10.287.310">
    <property type="match status" value="1"/>
</dbReference>
<dbReference type="Gene3D" id="6.10.250.3450">
    <property type="match status" value="1"/>
</dbReference>
<dbReference type="HAMAP" id="MF_00374">
    <property type="entry name" value="Ribosomal_uL29"/>
    <property type="match status" value="1"/>
</dbReference>
<dbReference type="InterPro" id="IPR001854">
    <property type="entry name" value="Ribosomal_uL29"/>
</dbReference>
<dbReference type="InterPro" id="IPR018254">
    <property type="entry name" value="Ribosomal_uL29_CS"/>
</dbReference>
<dbReference type="InterPro" id="IPR045059">
    <property type="entry name" value="Ribosomal_uL29_euk"/>
</dbReference>
<dbReference type="InterPro" id="IPR036049">
    <property type="entry name" value="Ribosomal_uL29_sf"/>
</dbReference>
<dbReference type="NCBIfam" id="TIGR00012">
    <property type="entry name" value="L29"/>
    <property type="match status" value="1"/>
</dbReference>
<dbReference type="PANTHER" id="PTHR45722">
    <property type="entry name" value="60S RIBOSOMAL PROTEIN L35"/>
    <property type="match status" value="1"/>
</dbReference>
<dbReference type="PANTHER" id="PTHR45722:SF2">
    <property type="entry name" value="LARGE RIBOSOMAL SUBUNIT PROTEIN UL29-RELATED"/>
    <property type="match status" value="1"/>
</dbReference>
<dbReference type="Pfam" id="PF00831">
    <property type="entry name" value="Ribosomal_L29"/>
    <property type="match status" value="1"/>
</dbReference>
<dbReference type="SUPFAM" id="SSF46561">
    <property type="entry name" value="Ribosomal protein L29 (L29p)"/>
    <property type="match status" value="1"/>
</dbReference>
<dbReference type="PROSITE" id="PS00579">
    <property type="entry name" value="RIBOSOMAL_L29"/>
    <property type="match status" value="1"/>
</dbReference>